<dbReference type="EC" id="2.1.1.-"/>
<dbReference type="EMBL" id="AY653733">
    <property type="protein sequence ID" value="AAV50495.1"/>
    <property type="molecule type" value="Genomic_DNA"/>
</dbReference>
<dbReference type="Proteomes" id="UP000001134">
    <property type="component" value="Genome"/>
</dbReference>
<dbReference type="GO" id="GO:0008168">
    <property type="term" value="F:methyltransferase activity"/>
    <property type="evidence" value="ECO:0007669"/>
    <property type="project" value="UniProtKB-KW"/>
</dbReference>
<dbReference type="GO" id="GO:0032259">
    <property type="term" value="P:methylation"/>
    <property type="evidence" value="ECO:0007669"/>
    <property type="project" value="UniProtKB-KW"/>
</dbReference>
<dbReference type="Gene3D" id="2.170.270.10">
    <property type="entry name" value="SET domain"/>
    <property type="match status" value="1"/>
</dbReference>
<dbReference type="InterPro" id="IPR001214">
    <property type="entry name" value="SET_dom"/>
</dbReference>
<dbReference type="InterPro" id="IPR046341">
    <property type="entry name" value="SET_dom_sf"/>
</dbReference>
<dbReference type="Pfam" id="PF00856">
    <property type="entry name" value="SET"/>
    <property type="match status" value="1"/>
</dbReference>
<dbReference type="SUPFAM" id="SSF82199">
    <property type="entry name" value="SET domain"/>
    <property type="match status" value="1"/>
</dbReference>
<dbReference type="PROSITE" id="PS50280">
    <property type="entry name" value="SET"/>
    <property type="match status" value="1"/>
</dbReference>
<evidence type="ECO:0000255" key="1">
    <source>
        <dbReference type="PROSITE-ProRule" id="PRU00190"/>
    </source>
</evidence>
<proteinExistence type="inferred from homology"/>
<comment type="similarity">
    <text evidence="1">Belongs to the class V-like SAM-binding methyltransferase superfamily.</text>
</comment>
<reference key="1">
    <citation type="journal article" date="2004" name="Science">
        <title>The 1.2-megabase genome sequence of Mimivirus.</title>
        <authorList>
            <person name="Raoult D."/>
            <person name="Audic S."/>
            <person name="Robert C."/>
            <person name="Abergel C."/>
            <person name="Renesto P."/>
            <person name="Ogata H."/>
            <person name="La Scola B."/>
            <person name="Susan M."/>
            <person name="Claverie J.-M."/>
        </authorList>
    </citation>
    <scope>NUCLEOTIDE SEQUENCE [LARGE SCALE GENOMIC DNA]</scope>
    <source>
        <strain>Rowbotham-Bradford</strain>
    </source>
</reference>
<organism>
    <name type="scientific">Acanthamoeba polyphaga mimivirus</name>
    <name type="common">APMV</name>
    <dbReference type="NCBI Taxonomy" id="212035"/>
    <lineage>
        <taxon>Viruses</taxon>
        <taxon>Varidnaviria</taxon>
        <taxon>Bamfordvirae</taxon>
        <taxon>Nucleocytoviricota</taxon>
        <taxon>Megaviricetes</taxon>
        <taxon>Imitervirales</taxon>
        <taxon>Mimiviridae</taxon>
        <taxon>Megamimivirinae</taxon>
        <taxon>Mimivirus</taxon>
        <taxon>Mimivirus bradfordmassiliense</taxon>
    </lineage>
</organism>
<gene>
    <name type="ordered locus">MIMI_L222</name>
</gene>
<keyword id="KW-0489">Methyltransferase</keyword>
<keyword id="KW-1185">Reference proteome</keyword>
<keyword id="KW-0949">S-adenosyl-L-methionine</keyword>
<keyword id="KW-0808">Transferase</keyword>
<accession>Q5UQB9</accession>
<protein>
    <recommendedName>
        <fullName>Putative SET domain-containing protein L222</fullName>
        <ecNumber>2.1.1.-</ecNumber>
    </recommendedName>
</protein>
<name>YL222_MIMIV</name>
<sequence>MSIDSSTSANIETLPVYSDSSNEYIQVIYQNPNIYEHEENNFKSVFTKSEIKSGQLILLEHVLVNDSTNSYLIIENNEYLFDMSHPRTDKFSECSEENRRLQAIKKLSSNCFGIDGNKLLTCAIQKINHSCTPNCAVNISEKYNFGGTHIVFMELFSINNIPANTEITISYGPVTGHKRDFECLCGKSLEEREKIFSIVCGLSRKISQLNNDLIKKYIYVYTTSDLGKKIMLNHFLATKGIYINKDKIVAITESGAETINNLVYKYMKIKESDQTNKKITSHKIKMFMTIIHACLFPEDSTDSSESVVLMREKN</sequence>
<feature type="chain" id="PRO_0000071245" description="Putative SET domain-containing protein L222">
    <location>
        <begin position="1"/>
        <end position="314"/>
    </location>
</feature>
<feature type="domain" description="SET" evidence="1">
    <location>
        <begin position="23"/>
        <end position="172"/>
    </location>
</feature>
<organismHost>
    <name type="scientific">Acanthamoeba polyphaga</name>
    <name type="common">Amoeba</name>
    <dbReference type="NCBI Taxonomy" id="5757"/>
</organismHost>